<evidence type="ECO:0000255" key="1"/>
<evidence type="ECO:0000255" key="2">
    <source>
        <dbReference type="PROSITE-ProRule" id="PRU00114"/>
    </source>
</evidence>
<evidence type="ECO:0000305" key="3"/>
<keyword id="KW-1015">Disulfide bond</keyword>
<keyword id="KW-0325">Glycoprotein</keyword>
<keyword id="KW-0393">Immunoglobulin domain</keyword>
<keyword id="KW-0472">Membrane</keyword>
<keyword id="KW-1185">Reference proteome</keyword>
<keyword id="KW-0677">Repeat</keyword>
<keyword id="KW-0732">Signal</keyword>
<keyword id="KW-0812">Transmembrane</keyword>
<keyword id="KW-1133">Transmembrane helix</keyword>
<accession>Q6DJ83</accession>
<organism>
    <name type="scientific">Xenopus tropicalis</name>
    <name type="common">Western clawed frog</name>
    <name type="synonym">Silurana tropicalis</name>
    <dbReference type="NCBI Taxonomy" id="8364"/>
    <lineage>
        <taxon>Eukaryota</taxon>
        <taxon>Metazoa</taxon>
        <taxon>Chordata</taxon>
        <taxon>Craniata</taxon>
        <taxon>Vertebrata</taxon>
        <taxon>Euteleostomi</taxon>
        <taxon>Amphibia</taxon>
        <taxon>Batrachia</taxon>
        <taxon>Anura</taxon>
        <taxon>Pipoidea</taxon>
        <taxon>Pipidae</taxon>
        <taxon>Xenopodinae</taxon>
        <taxon>Xenopus</taxon>
        <taxon>Silurana</taxon>
    </lineage>
</organism>
<proteinExistence type="evidence at transcript level"/>
<name>CADM2_XENTR</name>
<gene>
    <name type="primary">cadm2</name>
    <name type="synonym">igsf4d</name>
</gene>
<reference key="1">
    <citation type="submission" date="2004-06" db="EMBL/GenBank/DDBJ databases">
        <authorList>
            <consortium name="NIH - Xenopus Gene Collection (XGC) project"/>
        </authorList>
    </citation>
    <scope>NUCLEOTIDE SEQUENCE [LARGE SCALE MRNA]</scope>
</reference>
<sequence length="433" mass="47302">MILQPSALLCLSSLWGVIVQASQGQFPVTQNVTVVEGGTINLTCRVDQNDNTSLQWSNPAQQTLYFDDKKALRDNRIELVRASWHELSISISDVSLSDEGQYTCSLFTMPVKTSKAYLMVLGVPENPHISGFTSPVMEGDTIQLTCKSSGSKPAADIRWFKNDQEITDVQKIQQQDSNGKTFTVTSSLVFQGDRKDDGAVIRCRVDHESLTSTPQIAKQVLEIHYTPTVRILPSTPLPQEGQPLILICESKGKPLPEPVLWTKDGGELPDPERMTVNGRELTISFLNKTDNGTYRCEATNSIGQSSAEYVLIINDVPKPLFPTTIIPLFTSATVKTNVAMSTRTTKSAFITKDPNALPGPVATDHALIGGVVAVVVFVTLCSIILIGRYLARHKGTYLTNEAKGAEDAPDADTAIINAEGSQVNAEEKKEYFI</sequence>
<dbReference type="EMBL" id="BC075300">
    <property type="protein sequence ID" value="AAH75300.1"/>
    <property type="molecule type" value="mRNA"/>
</dbReference>
<dbReference type="RefSeq" id="NP_001005713.1">
    <property type="nucleotide sequence ID" value="NM_001005713.1"/>
</dbReference>
<dbReference type="SMR" id="Q6DJ83"/>
<dbReference type="FunCoup" id="Q6DJ83">
    <property type="interactions" value="722"/>
</dbReference>
<dbReference type="STRING" id="8364.ENSXETP00000023114"/>
<dbReference type="GlyCosmos" id="Q6DJ83">
    <property type="glycosylation" value="5 sites, No reported glycans"/>
</dbReference>
<dbReference type="PaxDb" id="8364-ENSXETP00000041944"/>
<dbReference type="DNASU" id="448238"/>
<dbReference type="GeneID" id="448238"/>
<dbReference type="KEGG" id="xtr:448238"/>
<dbReference type="AGR" id="Xenbase:XB-GENE-998536"/>
<dbReference type="CTD" id="253559"/>
<dbReference type="Xenbase" id="XB-GENE-998536">
    <property type="gene designation" value="cadm2"/>
</dbReference>
<dbReference type="eggNOG" id="ENOG502QV9X">
    <property type="taxonomic scope" value="Eukaryota"/>
</dbReference>
<dbReference type="HOGENOM" id="CLU_047574_2_1_1"/>
<dbReference type="InParanoid" id="Q6DJ83"/>
<dbReference type="OrthoDB" id="10028801at2759"/>
<dbReference type="Reactome" id="R-XTR-418990">
    <property type="pathway name" value="Adherens junctions interactions"/>
</dbReference>
<dbReference type="Proteomes" id="UP000008143">
    <property type="component" value="Chromosome 2"/>
</dbReference>
<dbReference type="Bgee" id="ENSXETG00000026489">
    <property type="expression patterns" value="Expressed in brain and 4 other cell types or tissues"/>
</dbReference>
<dbReference type="GO" id="GO:0016020">
    <property type="term" value="C:membrane"/>
    <property type="evidence" value="ECO:0007669"/>
    <property type="project" value="UniProtKB-SubCell"/>
</dbReference>
<dbReference type="CDD" id="cd05884">
    <property type="entry name" value="IgI_2_Necl-3"/>
    <property type="match status" value="1"/>
</dbReference>
<dbReference type="CDD" id="cd07701">
    <property type="entry name" value="IgV_1_Necl-3"/>
    <property type="match status" value="1"/>
</dbReference>
<dbReference type="FunFam" id="2.60.40.10:FF:000013">
    <property type="entry name" value="cell adhesion molecule 1 isoform X1"/>
    <property type="match status" value="1"/>
</dbReference>
<dbReference type="Gene3D" id="2.60.40.10">
    <property type="entry name" value="Immunoglobulins"/>
    <property type="match status" value="3"/>
</dbReference>
<dbReference type="InterPro" id="IPR013162">
    <property type="entry name" value="CD80_C2-set"/>
</dbReference>
<dbReference type="InterPro" id="IPR007110">
    <property type="entry name" value="Ig-like_dom"/>
</dbReference>
<dbReference type="InterPro" id="IPR036179">
    <property type="entry name" value="Ig-like_dom_sf"/>
</dbReference>
<dbReference type="InterPro" id="IPR013783">
    <property type="entry name" value="Ig-like_fold"/>
</dbReference>
<dbReference type="InterPro" id="IPR003599">
    <property type="entry name" value="Ig_sub"/>
</dbReference>
<dbReference type="InterPro" id="IPR003598">
    <property type="entry name" value="Ig_sub2"/>
</dbReference>
<dbReference type="InterPro" id="IPR013106">
    <property type="entry name" value="Ig_V-set"/>
</dbReference>
<dbReference type="InterPro" id="IPR003585">
    <property type="entry name" value="Neurexin-like"/>
</dbReference>
<dbReference type="PANTHER" id="PTHR45889:SF1">
    <property type="entry name" value="CELL ADHESION MOLECULE 2"/>
    <property type="match status" value="1"/>
</dbReference>
<dbReference type="PANTHER" id="PTHR45889">
    <property type="entry name" value="IG-LIKE DOMAIN-CONTAINING PROTEIN"/>
    <property type="match status" value="1"/>
</dbReference>
<dbReference type="Pfam" id="PF08205">
    <property type="entry name" value="C2-set_2"/>
    <property type="match status" value="1"/>
</dbReference>
<dbReference type="Pfam" id="PF13927">
    <property type="entry name" value="Ig_3"/>
    <property type="match status" value="1"/>
</dbReference>
<dbReference type="Pfam" id="PF07686">
    <property type="entry name" value="V-set"/>
    <property type="match status" value="1"/>
</dbReference>
<dbReference type="SMART" id="SM00294">
    <property type="entry name" value="4.1m"/>
    <property type="match status" value="1"/>
</dbReference>
<dbReference type="SMART" id="SM00409">
    <property type="entry name" value="IG"/>
    <property type="match status" value="3"/>
</dbReference>
<dbReference type="SMART" id="SM00408">
    <property type="entry name" value="IGc2"/>
    <property type="match status" value="3"/>
</dbReference>
<dbReference type="SUPFAM" id="SSF48726">
    <property type="entry name" value="Immunoglobulin"/>
    <property type="match status" value="3"/>
</dbReference>
<dbReference type="PROSITE" id="PS50835">
    <property type="entry name" value="IG_LIKE"/>
    <property type="match status" value="3"/>
</dbReference>
<feature type="signal peptide" evidence="1">
    <location>
        <begin position="1"/>
        <end position="24"/>
    </location>
</feature>
<feature type="chain" id="PRO_0000291973" description="Cell adhesion molecule 2">
    <location>
        <begin position="25"/>
        <end position="433"/>
    </location>
</feature>
<feature type="topological domain" description="Extracellular" evidence="1">
    <location>
        <begin position="25"/>
        <end position="365"/>
    </location>
</feature>
<feature type="transmembrane region" description="Helical" evidence="1">
    <location>
        <begin position="366"/>
        <end position="386"/>
    </location>
</feature>
<feature type="topological domain" description="Cytoplasmic" evidence="1">
    <location>
        <begin position="387"/>
        <end position="433"/>
    </location>
</feature>
<feature type="domain" description="Ig-like V-type">
    <location>
        <begin position="27"/>
        <end position="114"/>
    </location>
</feature>
<feature type="domain" description="Ig-like C2-type 1">
    <location>
        <begin position="127"/>
        <end position="217"/>
    </location>
</feature>
<feature type="domain" description="Ig-like C2-type 2">
    <location>
        <begin position="227"/>
        <end position="312"/>
    </location>
</feature>
<feature type="glycosylation site" description="N-linked (GlcNAc...) asparagine" evidence="1">
    <location>
        <position position="31"/>
    </location>
</feature>
<feature type="glycosylation site" description="N-linked (GlcNAc...) asparagine" evidence="1">
    <location>
        <position position="41"/>
    </location>
</feature>
<feature type="glycosylation site" description="N-linked (GlcNAc...) asparagine" evidence="1">
    <location>
        <position position="51"/>
    </location>
</feature>
<feature type="glycosylation site" description="N-linked (GlcNAc...) asparagine" evidence="1">
    <location>
        <position position="287"/>
    </location>
</feature>
<feature type="glycosylation site" description="N-linked (GlcNAc...) asparagine" evidence="1">
    <location>
        <position position="291"/>
    </location>
</feature>
<feature type="disulfide bond" evidence="2">
    <location>
        <begin position="44"/>
        <end position="104"/>
    </location>
</feature>
<feature type="disulfide bond" evidence="2">
    <location>
        <begin position="146"/>
        <end position="203"/>
    </location>
</feature>
<feature type="disulfide bond" evidence="2">
    <location>
        <begin position="248"/>
        <end position="296"/>
    </location>
</feature>
<comment type="subcellular location">
    <subcellularLocation>
        <location evidence="3">Membrane</location>
        <topology evidence="3">Single-pass type I membrane protein</topology>
    </subcellularLocation>
</comment>
<comment type="similarity">
    <text evidence="3">Belongs to the nectin family.</text>
</comment>
<protein>
    <recommendedName>
        <fullName>Cell adhesion molecule 2</fullName>
    </recommendedName>
    <alternativeName>
        <fullName>Immunoglobulin superfamily member 4D</fullName>
        <shortName>IgSF4D</shortName>
    </alternativeName>
</protein>